<proteinExistence type="inferred from homology"/>
<sequence length="158" mass="18086">MSTSNLNEISKQILKEEETLQFSSFTNEDALQLGLFIVETAKRERKLIAVDITKNGVQLFHFKMTGTNEENTKWIERKKRVVSLHDRSSYYMQIQSEITGVSYNEKYLLDTSEYAAFGGCFPIRIKNVGVIGMITVSGLPPEEDHELVIRAVKNHLKQ</sequence>
<reference key="1">
    <citation type="submission" date="2008-10" db="EMBL/GenBank/DDBJ databases">
        <title>Genome sequence of Bacillus cereus B4264.</title>
        <authorList>
            <person name="Dodson R.J."/>
            <person name="Durkin A.S."/>
            <person name="Rosovitz M.J."/>
            <person name="Rasko D.A."/>
            <person name="Hoffmaster A."/>
            <person name="Ravel J."/>
            <person name="Sutton G."/>
        </authorList>
    </citation>
    <scope>NUCLEOTIDE SEQUENCE [LARGE SCALE GENOMIC DNA]</scope>
    <source>
        <strain>B4264</strain>
    </source>
</reference>
<name>Y3401_BACC4</name>
<evidence type="ECO:0000255" key="1">
    <source>
        <dbReference type="HAMAP-Rule" id="MF_00761"/>
    </source>
</evidence>
<comment type="similarity">
    <text evidence="1">Belongs to the UPF0303 family.</text>
</comment>
<feature type="chain" id="PRO_1000198318" description="UPF0303 protein BCB4264_A3401">
    <location>
        <begin position="1"/>
        <end position="158"/>
    </location>
</feature>
<gene>
    <name type="ordered locus">BCB4264_A3401</name>
</gene>
<organism>
    <name type="scientific">Bacillus cereus (strain B4264)</name>
    <dbReference type="NCBI Taxonomy" id="405532"/>
    <lineage>
        <taxon>Bacteria</taxon>
        <taxon>Bacillati</taxon>
        <taxon>Bacillota</taxon>
        <taxon>Bacilli</taxon>
        <taxon>Bacillales</taxon>
        <taxon>Bacillaceae</taxon>
        <taxon>Bacillus</taxon>
        <taxon>Bacillus cereus group</taxon>
    </lineage>
</organism>
<dbReference type="EMBL" id="CP001176">
    <property type="protein sequence ID" value="ACK60025.1"/>
    <property type="molecule type" value="Genomic_DNA"/>
</dbReference>
<dbReference type="SMR" id="B7H6D1"/>
<dbReference type="KEGG" id="bcb:BCB4264_A3401"/>
<dbReference type="HOGENOM" id="CLU_101036_2_0_9"/>
<dbReference type="Proteomes" id="UP000007096">
    <property type="component" value="Chromosome"/>
</dbReference>
<dbReference type="FunFam" id="3.30.450.150:FF:000002">
    <property type="entry name" value="UPF0303 protein BCAH820_3413"/>
    <property type="match status" value="1"/>
</dbReference>
<dbReference type="Gene3D" id="3.30.450.150">
    <property type="entry name" value="Haem-degrading domain"/>
    <property type="match status" value="1"/>
</dbReference>
<dbReference type="HAMAP" id="MF_00761">
    <property type="entry name" value="UPF0303"/>
    <property type="match status" value="1"/>
</dbReference>
<dbReference type="InterPro" id="IPR005624">
    <property type="entry name" value="PduO/GlcC-like"/>
</dbReference>
<dbReference type="InterPro" id="IPR038084">
    <property type="entry name" value="PduO/GlcC-like_sf"/>
</dbReference>
<dbReference type="InterPro" id="IPR010371">
    <property type="entry name" value="YBR137W-like"/>
</dbReference>
<dbReference type="NCBIfam" id="NF002692">
    <property type="entry name" value="PRK02487.1-1"/>
    <property type="match status" value="1"/>
</dbReference>
<dbReference type="NCBIfam" id="NF002696">
    <property type="entry name" value="PRK02487.1-5"/>
    <property type="match status" value="1"/>
</dbReference>
<dbReference type="PANTHER" id="PTHR28255">
    <property type="match status" value="1"/>
</dbReference>
<dbReference type="PANTHER" id="PTHR28255:SF1">
    <property type="entry name" value="UPF0303 PROTEIN YBR137W"/>
    <property type="match status" value="1"/>
</dbReference>
<dbReference type="Pfam" id="PF03928">
    <property type="entry name" value="HbpS-like"/>
    <property type="match status" value="1"/>
</dbReference>
<dbReference type="PIRSF" id="PIRSF008757">
    <property type="entry name" value="UCP008757"/>
    <property type="match status" value="1"/>
</dbReference>
<dbReference type="SUPFAM" id="SSF143744">
    <property type="entry name" value="GlcG-like"/>
    <property type="match status" value="1"/>
</dbReference>
<protein>
    <recommendedName>
        <fullName evidence="1">UPF0303 protein BCB4264_A3401</fullName>
    </recommendedName>
</protein>
<accession>B7H6D1</accession>